<sequence>MSVNIVVIGMQWGDEGKGKIVDFLATHADYVVRYQGGHNAGHTLVVDNKKIVLHVLPSGILHNNIISIIANGVVLEPQSFINEIKLLEAENLCIRKRIFISESCNLIFPYHVFMDLAREKQKYRNFIGTTGCGIGPAYEDKVARRGLCVGDLLDLSFFSRKLEENVNFYNHQFTNFYHTEKVSFKEIFSNLLKVSDVIISMINDIPDLLNNAINDNKSIIFEGAQGTLLDIDHGIYPYVTSSSSVSGSVCSGAGVGIKNLGDIYGVVKAYSTRVGNGPFPTELFGELDAYFCRFGNEFGATTGRRRRTGWLDIVLLRRVISINSITKICLTKLDILDNLEKILICTSYHLKGVKNKKWDSVPFCRNDWDKIKPVYETFLGWKQNTRGITEFDELPKLAKKYIHRIEELIKVPVYIISTGPDRQDIIIRN</sequence>
<name>PURA_BUCBP</name>
<keyword id="KW-0963">Cytoplasm</keyword>
<keyword id="KW-0342">GTP-binding</keyword>
<keyword id="KW-0436">Ligase</keyword>
<keyword id="KW-0460">Magnesium</keyword>
<keyword id="KW-0479">Metal-binding</keyword>
<keyword id="KW-0547">Nucleotide-binding</keyword>
<keyword id="KW-0658">Purine biosynthesis</keyword>
<keyword id="KW-1185">Reference proteome</keyword>
<reference key="1">
    <citation type="journal article" date="2003" name="Proc. Natl. Acad. Sci. U.S.A.">
        <title>Reductive genome evolution in Buchnera aphidicola.</title>
        <authorList>
            <person name="van Ham R.C.H.J."/>
            <person name="Kamerbeek J."/>
            <person name="Palacios C."/>
            <person name="Rausell C."/>
            <person name="Abascal F."/>
            <person name="Bastolla U."/>
            <person name="Fernandez J.M."/>
            <person name="Jimenez L."/>
            <person name="Postigo M."/>
            <person name="Silva F.J."/>
            <person name="Tamames J."/>
            <person name="Viguera E."/>
            <person name="Latorre A."/>
            <person name="Valencia A."/>
            <person name="Moran F."/>
            <person name="Moya A."/>
        </authorList>
    </citation>
    <scope>NUCLEOTIDE SEQUENCE [LARGE SCALE GENOMIC DNA]</scope>
    <source>
        <strain>Bp</strain>
    </source>
</reference>
<gene>
    <name evidence="1" type="primary">purA</name>
    <name type="ordered locus">bbp_511</name>
</gene>
<protein>
    <recommendedName>
        <fullName evidence="1">Adenylosuccinate synthetase</fullName>
        <shortName evidence="1">AMPSase</shortName>
        <shortName evidence="1">AdSS</shortName>
        <ecNumber evidence="1">6.3.4.4</ecNumber>
    </recommendedName>
    <alternativeName>
        <fullName evidence="1">IMP--aspartate ligase</fullName>
    </alternativeName>
</protein>
<dbReference type="EC" id="6.3.4.4" evidence="1"/>
<dbReference type="EMBL" id="AE016826">
    <property type="protein sequence ID" value="AAO27214.1"/>
    <property type="molecule type" value="Genomic_DNA"/>
</dbReference>
<dbReference type="RefSeq" id="WP_011091615.1">
    <property type="nucleotide sequence ID" value="NC_004545.1"/>
</dbReference>
<dbReference type="SMR" id="P59428"/>
<dbReference type="STRING" id="224915.bbp_511"/>
<dbReference type="KEGG" id="bab:bbp_511"/>
<dbReference type="eggNOG" id="COG0104">
    <property type="taxonomic scope" value="Bacteria"/>
</dbReference>
<dbReference type="HOGENOM" id="CLU_029848_0_0_6"/>
<dbReference type="OrthoDB" id="9807553at2"/>
<dbReference type="UniPathway" id="UPA00075">
    <property type="reaction ID" value="UER00335"/>
</dbReference>
<dbReference type="Proteomes" id="UP000000601">
    <property type="component" value="Chromosome"/>
</dbReference>
<dbReference type="GO" id="GO:0005737">
    <property type="term" value="C:cytoplasm"/>
    <property type="evidence" value="ECO:0007669"/>
    <property type="project" value="UniProtKB-SubCell"/>
</dbReference>
<dbReference type="GO" id="GO:0004019">
    <property type="term" value="F:adenylosuccinate synthase activity"/>
    <property type="evidence" value="ECO:0007669"/>
    <property type="project" value="UniProtKB-UniRule"/>
</dbReference>
<dbReference type="GO" id="GO:0005525">
    <property type="term" value="F:GTP binding"/>
    <property type="evidence" value="ECO:0007669"/>
    <property type="project" value="UniProtKB-UniRule"/>
</dbReference>
<dbReference type="GO" id="GO:0000287">
    <property type="term" value="F:magnesium ion binding"/>
    <property type="evidence" value="ECO:0007669"/>
    <property type="project" value="UniProtKB-UniRule"/>
</dbReference>
<dbReference type="GO" id="GO:0044208">
    <property type="term" value="P:'de novo' AMP biosynthetic process"/>
    <property type="evidence" value="ECO:0007669"/>
    <property type="project" value="UniProtKB-UniRule"/>
</dbReference>
<dbReference type="GO" id="GO:0046040">
    <property type="term" value="P:IMP metabolic process"/>
    <property type="evidence" value="ECO:0007669"/>
    <property type="project" value="TreeGrafter"/>
</dbReference>
<dbReference type="CDD" id="cd03108">
    <property type="entry name" value="AdSS"/>
    <property type="match status" value="1"/>
</dbReference>
<dbReference type="FunFam" id="1.10.300.10:FF:000001">
    <property type="entry name" value="Adenylosuccinate synthetase"/>
    <property type="match status" value="1"/>
</dbReference>
<dbReference type="FunFam" id="3.90.170.10:FF:000001">
    <property type="entry name" value="Adenylosuccinate synthetase"/>
    <property type="match status" value="1"/>
</dbReference>
<dbReference type="Gene3D" id="3.40.440.10">
    <property type="entry name" value="Adenylosuccinate Synthetase, subunit A, domain 1"/>
    <property type="match status" value="1"/>
</dbReference>
<dbReference type="Gene3D" id="1.10.300.10">
    <property type="entry name" value="Adenylosuccinate Synthetase, subunit A, domain 2"/>
    <property type="match status" value="1"/>
</dbReference>
<dbReference type="Gene3D" id="3.90.170.10">
    <property type="entry name" value="Adenylosuccinate Synthetase, subunit A, domain 3"/>
    <property type="match status" value="1"/>
</dbReference>
<dbReference type="HAMAP" id="MF_00011">
    <property type="entry name" value="Adenylosucc_synth"/>
    <property type="match status" value="1"/>
</dbReference>
<dbReference type="InterPro" id="IPR018220">
    <property type="entry name" value="Adenylosuccin_syn_GTP-bd"/>
</dbReference>
<dbReference type="InterPro" id="IPR033128">
    <property type="entry name" value="Adenylosuccin_syn_Lys_AS"/>
</dbReference>
<dbReference type="InterPro" id="IPR042109">
    <property type="entry name" value="Adenylosuccinate_synth_dom1"/>
</dbReference>
<dbReference type="InterPro" id="IPR042110">
    <property type="entry name" value="Adenylosuccinate_synth_dom2"/>
</dbReference>
<dbReference type="InterPro" id="IPR042111">
    <property type="entry name" value="Adenylosuccinate_synth_dom3"/>
</dbReference>
<dbReference type="InterPro" id="IPR001114">
    <property type="entry name" value="Adenylosuccinate_synthetase"/>
</dbReference>
<dbReference type="InterPro" id="IPR027417">
    <property type="entry name" value="P-loop_NTPase"/>
</dbReference>
<dbReference type="NCBIfam" id="NF002223">
    <property type="entry name" value="PRK01117.1"/>
    <property type="match status" value="1"/>
</dbReference>
<dbReference type="NCBIfam" id="TIGR00184">
    <property type="entry name" value="purA"/>
    <property type="match status" value="1"/>
</dbReference>
<dbReference type="PANTHER" id="PTHR11846">
    <property type="entry name" value="ADENYLOSUCCINATE SYNTHETASE"/>
    <property type="match status" value="1"/>
</dbReference>
<dbReference type="PANTHER" id="PTHR11846:SF0">
    <property type="entry name" value="ADENYLOSUCCINATE SYNTHETASE"/>
    <property type="match status" value="1"/>
</dbReference>
<dbReference type="Pfam" id="PF00709">
    <property type="entry name" value="Adenylsucc_synt"/>
    <property type="match status" value="1"/>
</dbReference>
<dbReference type="SMART" id="SM00788">
    <property type="entry name" value="Adenylsucc_synt"/>
    <property type="match status" value="1"/>
</dbReference>
<dbReference type="SUPFAM" id="SSF52540">
    <property type="entry name" value="P-loop containing nucleoside triphosphate hydrolases"/>
    <property type="match status" value="1"/>
</dbReference>
<dbReference type="PROSITE" id="PS01266">
    <property type="entry name" value="ADENYLOSUCCIN_SYN_1"/>
    <property type="match status" value="1"/>
</dbReference>
<dbReference type="PROSITE" id="PS00513">
    <property type="entry name" value="ADENYLOSUCCIN_SYN_2"/>
    <property type="match status" value="1"/>
</dbReference>
<accession>P59428</accession>
<organism>
    <name type="scientific">Buchnera aphidicola subsp. Baizongia pistaciae (strain Bp)</name>
    <dbReference type="NCBI Taxonomy" id="224915"/>
    <lineage>
        <taxon>Bacteria</taxon>
        <taxon>Pseudomonadati</taxon>
        <taxon>Pseudomonadota</taxon>
        <taxon>Gammaproteobacteria</taxon>
        <taxon>Enterobacterales</taxon>
        <taxon>Erwiniaceae</taxon>
        <taxon>Buchnera</taxon>
    </lineage>
</organism>
<feature type="chain" id="PRO_0000095159" description="Adenylosuccinate synthetase">
    <location>
        <begin position="1"/>
        <end position="429"/>
    </location>
</feature>
<feature type="active site" description="Proton acceptor" evidence="1">
    <location>
        <position position="14"/>
    </location>
</feature>
<feature type="active site" description="Proton donor" evidence="1">
    <location>
        <position position="42"/>
    </location>
</feature>
<feature type="binding site" evidence="1">
    <location>
        <begin position="13"/>
        <end position="19"/>
    </location>
    <ligand>
        <name>GTP</name>
        <dbReference type="ChEBI" id="CHEBI:37565"/>
    </ligand>
</feature>
<feature type="binding site" description="in other chain" evidence="1">
    <location>
        <begin position="14"/>
        <end position="17"/>
    </location>
    <ligand>
        <name>IMP</name>
        <dbReference type="ChEBI" id="CHEBI:58053"/>
        <note>ligand shared between dimeric partners</note>
    </ligand>
</feature>
<feature type="binding site" evidence="1">
    <location>
        <position position="14"/>
    </location>
    <ligand>
        <name>Mg(2+)</name>
        <dbReference type="ChEBI" id="CHEBI:18420"/>
    </ligand>
</feature>
<feature type="binding site" description="in other chain" evidence="1">
    <location>
        <begin position="39"/>
        <end position="42"/>
    </location>
    <ligand>
        <name>IMP</name>
        <dbReference type="ChEBI" id="CHEBI:58053"/>
        <note>ligand shared between dimeric partners</note>
    </ligand>
</feature>
<feature type="binding site" evidence="1">
    <location>
        <begin position="41"/>
        <end position="43"/>
    </location>
    <ligand>
        <name>GTP</name>
        <dbReference type="ChEBI" id="CHEBI:37565"/>
    </ligand>
</feature>
<feature type="binding site" evidence="1">
    <location>
        <position position="41"/>
    </location>
    <ligand>
        <name>Mg(2+)</name>
        <dbReference type="ChEBI" id="CHEBI:18420"/>
    </ligand>
</feature>
<feature type="binding site" description="in other chain" evidence="1">
    <location>
        <position position="130"/>
    </location>
    <ligand>
        <name>IMP</name>
        <dbReference type="ChEBI" id="CHEBI:58053"/>
        <note>ligand shared between dimeric partners</note>
    </ligand>
</feature>
<feature type="binding site" evidence="1">
    <location>
        <position position="144"/>
    </location>
    <ligand>
        <name>IMP</name>
        <dbReference type="ChEBI" id="CHEBI:58053"/>
        <note>ligand shared between dimeric partners</note>
    </ligand>
</feature>
<feature type="binding site" description="in other chain" evidence="1">
    <location>
        <position position="225"/>
    </location>
    <ligand>
        <name>IMP</name>
        <dbReference type="ChEBI" id="CHEBI:58053"/>
        <note>ligand shared between dimeric partners</note>
    </ligand>
</feature>
<feature type="binding site" description="in other chain" evidence="1">
    <location>
        <position position="240"/>
    </location>
    <ligand>
        <name>IMP</name>
        <dbReference type="ChEBI" id="CHEBI:58053"/>
        <note>ligand shared between dimeric partners</note>
    </ligand>
</feature>
<feature type="binding site" evidence="1">
    <location>
        <begin position="300"/>
        <end position="306"/>
    </location>
    <ligand>
        <name>substrate</name>
    </ligand>
</feature>
<feature type="binding site" description="in other chain" evidence="1">
    <location>
        <position position="304"/>
    </location>
    <ligand>
        <name>IMP</name>
        <dbReference type="ChEBI" id="CHEBI:58053"/>
        <note>ligand shared between dimeric partners</note>
    </ligand>
</feature>
<feature type="binding site" evidence="1">
    <location>
        <position position="306"/>
    </location>
    <ligand>
        <name>GTP</name>
        <dbReference type="ChEBI" id="CHEBI:37565"/>
    </ligand>
</feature>
<feature type="binding site" evidence="1">
    <location>
        <begin position="332"/>
        <end position="334"/>
    </location>
    <ligand>
        <name>GTP</name>
        <dbReference type="ChEBI" id="CHEBI:37565"/>
    </ligand>
</feature>
<feature type="binding site" evidence="1">
    <location>
        <begin position="417"/>
        <end position="419"/>
    </location>
    <ligand>
        <name>GTP</name>
        <dbReference type="ChEBI" id="CHEBI:37565"/>
    </ligand>
</feature>
<proteinExistence type="inferred from homology"/>
<evidence type="ECO:0000255" key="1">
    <source>
        <dbReference type="HAMAP-Rule" id="MF_00011"/>
    </source>
</evidence>
<comment type="function">
    <text evidence="1">Plays an important role in the de novo pathway of purine nucleotide biosynthesis. Catalyzes the first committed step in the biosynthesis of AMP from IMP.</text>
</comment>
<comment type="catalytic activity">
    <reaction evidence="1">
        <text>IMP + L-aspartate + GTP = N(6)-(1,2-dicarboxyethyl)-AMP + GDP + phosphate + 2 H(+)</text>
        <dbReference type="Rhea" id="RHEA:15753"/>
        <dbReference type="ChEBI" id="CHEBI:15378"/>
        <dbReference type="ChEBI" id="CHEBI:29991"/>
        <dbReference type="ChEBI" id="CHEBI:37565"/>
        <dbReference type="ChEBI" id="CHEBI:43474"/>
        <dbReference type="ChEBI" id="CHEBI:57567"/>
        <dbReference type="ChEBI" id="CHEBI:58053"/>
        <dbReference type="ChEBI" id="CHEBI:58189"/>
        <dbReference type="EC" id="6.3.4.4"/>
    </reaction>
</comment>
<comment type="cofactor">
    <cofactor evidence="1">
        <name>Mg(2+)</name>
        <dbReference type="ChEBI" id="CHEBI:18420"/>
    </cofactor>
    <text evidence="1">Binds 1 Mg(2+) ion per subunit.</text>
</comment>
<comment type="pathway">
    <text evidence="1">Purine metabolism; AMP biosynthesis via de novo pathway; AMP from IMP: step 1/2.</text>
</comment>
<comment type="subunit">
    <text evidence="1">Homodimer.</text>
</comment>
<comment type="subcellular location">
    <subcellularLocation>
        <location evidence="1">Cytoplasm</location>
    </subcellularLocation>
</comment>
<comment type="similarity">
    <text evidence="1">Belongs to the adenylosuccinate synthetase family.</text>
</comment>